<name>SPRT_VIBA3</name>
<proteinExistence type="inferred from homology"/>
<dbReference type="EMBL" id="FM954972">
    <property type="protein sequence ID" value="CAV19923.1"/>
    <property type="molecule type" value="Genomic_DNA"/>
</dbReference>
<dbReference type="STRING" id="575788.VS_2673"/>
<dbReference type="KEGG" id="vsp:VS_2673"/>
<dbReference type="PATRIC" id="fig|575788.5.peg.3916"/>
<dbReference type="eggNOG" id="COG3091">
    <property type="taxonomic scope" value="Bacteria"/>
</dbReference>
<dbReference type="HOGENOM" id="CLU_113336_0_1_6"/>
<dbReference type="Proteomes" id="UP000009100">
    <property type="component" value="Chromosome 1"/>
</dbReference>
<dbReference type="GO" id="GO:0005737">
    <property type="term" value="C:cytoplasm"/>
    <property type="evidence" value="ECO:0007669"/>
    <property type="project" value="UniProtKB-SubCell"/>
</dbReference>
<dbReference type="GO" id="GO:0008270">
    <property type="term" value="F:zinc ion binding"/>
    <property type="evidence" value="ECO:0007669"/>
    <property type="project" value="UniProtKB-UniRule"/>
</dbReference>
<dbReference type="GO" id="GO:0006950">
    <property type="term" value="P:response to stress"/>
    <property type="evidence" value="ECO:0007669"/>
    <property type="project" value="UniProtKB-ARBA"/>
</dbReference>
<dbReference type="HAMAP" id="MF_00746">
    <property type="entry name" value="SprT"/>
    <property type="match status" value="1"/>
</dbReference>
<dbReference type="InterPro" id="IPR006640">
    <property type="entry name" value="SprT-like_domain"/>
</dbReference>
<dbReference type="InterPro" id="IPR035240">
    <property type="entry name" value="SprT_Zn_ribbon"/>
</dbReference>
<dbReference type="InterPro" id="IPR023483">
    <property type="entry name" value="Uncharacterised_SprT"/>
</dbReference>
<dbReference type="NCBIfam" id="NF003421">
    <property type="entry name" value="PRK04860.1"/>
    <property type="match status" value="1"/>
</dbReference>
<dbReference type="PANTHER" id="PTHR38773">
    <property type="entry name" value="PROTEIN SPRT"/>
    <property type="match status" value="1"/>
</dbReference>
<dbReference type="PANTHER" id="PTHR38773:SF1">
    <property type="entry name" value="PROTEIN SPRT"/>
    <property type="match status" value="1"/>
</dbReference>
<dbReference type="Pfam" id="PF10263">
    <property type="entry name" value="SprT-like"/>
    <property type="match status" value="1"/>
</dbReference>
<dbReference type="Pfam" id="PF17283">
    <property type="entry name" value="Zn_ribbon_SprT"/>
    <property type="match status" value="1"/>
</dbReference>
<dbReference type="SMART" id="SM00731">
    <property type="entry name" value="SprT"/>
    <property type="match status" value="1"/>
</dbReference>
<dbReference type="PROSITE" id="PS00142">
    <property type="entry name" value="ZINC_PROTEASE"/>
    <property type="match status" value="1"/>
</dbReference>
<organism>
    <name type="scientific">Vibrio atlanticus (strain LGP32)</name>
    <name type="common">Vibrio splendidus (strain Mel32)</name>
    <dbReference type="NCBI Taxonomy" id="575788"/>
    <lineage>
        <taxon>Bacteria</taxon>
        <taxon>Pseudomonadati</taxon>
        <taxon>Pseudomonadota</taxon>
        <taxon>Gammaproteobacteria</taxon>
        <taxon>Vibrionales</taxon>
        <taxon>Vibrionaceae</taxon>
        <taxon>Vibrio</taxon>
    </lineage>
</organism>
<evidence type="ECO:0000255" key="1">
    <source>
        <dbReference type="HAMAP-Rule" id="MF_00746"/>
    </source>
</evidence>
<comment type="cofactor">
    <cofactor evidence="1">
        <name>Zn(2+)</name>
        <dbReference type="ChEBI" id="CHEBI:29105"/>
    </cofactor>
    <text evidence="1">Binds 1 zinc ion.</text>
</comment>
<comment type="subcellular location">
    <subcellularLocation>
        <location evidence="1">Cytoplasm</location>
    </subcellularLocation>
</comment>
<comment type="similarity">
    <text evidence="1">Belongs to the SprT family.</text>
</comment>
<accession>B7VKP6</accession>
<reference key="1">
    <citation type="submission" date="2009-02" db="EMBL/GenBank/DDBJ databases">
        <title>Vibrio splendidus str. LGP32 complete genome.</title>
        <authorList>
            <person name="Mazel D."/>
            <person name="Le Roux F."/>
        </authorList>
    </citation>
    <scope>NUCLEOTIDE SEQUENCE [LARGE SCALE GENOMIC DNA]</scope>
    <source>
        <strain>LGP32</strain>
    </source>
</reference>
<sequence length="166" mass="19255">MSYTPQQHRVNKKLGECLAIANQHFSREFPCPTVTYKLRGKAAGKAYLQLNEIKLNQVLFSENEDAFINEVVPHELAHLITHQVFGRVRPHGNEWKYVMEKVFNVPARTTHSLEITSVQGKTFEYRCDCTTYPLSIRRHNKVIRNQSTYRCQQCQQTLAFTGLQLS</sequence>
<feature type="chain" id="PRO_1000148337" description="Protein SprT">
    <location>
        <begin position="1"/>
        <end position="166"/>
    </location>
</feature>
<feature type="domain" description="SprT-like" evidence="1">
    <location>
        <begin position="21"/>
        <end position="160"/>
    </location>
</feature>
<feature type="active site" evidence="1">
    <location>
        <position position="75"/>
    </location>
</feature>
<feature type="binding site" evidence="1">
    <location>
        <position position="74"/>
    </location>
    <ligand>
        <name>Zn(2+)</name>
        <dbReference type="ChEBI" id="CHEBI:29105"/>
    </ligand>
</feature>
<feature type="binding site" evidence="1">
    <location>
        <position position="78"/>
    </location>
    <ligand>
        <name>Zn(2+)</name>
        <dbReference type="ChEBI" id="CHEBI:29105"/>
    </ligand>
</feature>
<gene>
    <name evidence="1" type="primary">sprT</name>
    <name type="ordered locus">VS_2673</name>
</gene>
<keyword id="KW-0963">Cytoplasm</keyword>
<keyword id="KW-0479">Metal-binding</keyword>
<keyword id="KW-0862">Zinc</keyword>
<protein>
    <recommendedName>
        <fullName evidence="1">Protein SprT</fullName>
    </recommendedName>
</protein>